<evidence type="ECO:0000255" key="1">
    <source>
        <dbReference type="PROSITE-ProRule" id="PRU00042"/>
    </source>
</evidence>
<evidence type="ECO:0000256" key="2">
    <source>
        <dbReference type="SAM" id="MobiDB-lite"/>
    </source>
</evidence>
<evidence type="ECO:0000305" key="3"/>
<evidence type="ECO:0007744" key="4">
    <source>
    </source>
</evidence>
<evidence type="ECO:0007744" key="5">
    <source>
    </source>
</evidence>
<evidence type="ECO:0007744" key="6">
    <source>
    </source>
</evidence>
<proteinExistence type="evidence at protein level"/>
<dbReference type="EMBL" id="AF131739">
    <property type="protein sequence ID" value="AAD20028.1"/>
    <property type="molecule type" value="mRNA"/>
</dbReference>
<dbReference type="EMBL" id="AK000938">
    <property type="protein sequence ID" value="BAA91434.1"/>
    <property type="status" value="ALT_SEQ"/>
    <property type="molecule type" value="mRNA"/>
</dbReference>
<dbReference type="EMBL" id="AK296201">
    <property type="protein sequence ID" value="BAG58929.1"/>
    <property type="molecule type" value="mRNA"/>
</dbReference>
<dbReference type="EMBL" id="CR457146">
    <property type="protein sequence ID" value="CAG33427.1"/>
    <property type="molecule type" value="mRNA"/>
</dbReference>
<dbReference type="EMBL" id="AL512353">
    <property type="status" value="NOT_ANNOTATED_CDS"/>
    <property type="molecule type" value="Genomic_DNA"/>
</dbReference>
<dbReference type="EMBL" id="CH471059">
    <property type="protein sequence ID" value="EAX07127.1"/>
    <property type="molecule type" value="Genomic_DNA"/>
</dbReference>
<dbReference type="EMBL" id="CH471059">
    <property type="protein sequence ID" value="EAX07128.1"/>
    <property type="molecule type" value="Genomic_DNA"/>
</dbReference>
<dbReference type="EMBL" id="BC000157">
    <property type="protein sequence ID" value="AAH00157.1"/>
    <property type="molecule type" value="mRNA"/>
</dbReference>
<dbReference type="CCDS" id="CCDS476.1">
    <molecule id="Q5VV52-3"/>
</dbReference>
<dbReference type="CCDS" id="CCDS55595.1">
    <molecule id="Q5VV52-2"/>
</dbReference>
<dbReference type="RefSeq" id="NP_001229668.1">
    <molecule id="Q5VV52-2"/>
    <property type="nucleotide sequence ID" value="NM_001242739.2"/>
</dbReference>
<dbReference type="RefSeq" id="NP_056995.1">
    <molecule id="Q5VV52-3"/>
    <property type="nucleotide sequence ID" value="NM_015911.4"/>
</dbReference>
<dbReference type="RefSeq" id="XP_016856889.1">
    <property type="nucleotide sequence ID" value="XM_017001400.1"/>
</dbReference>
<dbReference type="RefSeq" id="XP_016856890.1">
    <property type="nucleotide sequence ID" value="XM_017001401.1"/>
</dbReference>
<dbReference type="RefSeq" id="XP_047277855.1">
    <molecule id="Q5VV52-2"/>
    <property type="nucleotide sequence ID" value="XM_047421899.1"/>
</dbReference>
<dbReference type="SMR" id="Q5VV52"/>
<dbReference type="BioGRID" id="119250">
    <property type="interactions" value="37"/>
</dbReference>
<dbReference type="FunCoup" id="Q5VV52">
    <property type="interactions" value="147"/>
</dbReference>
<dbReference type="IntAct" id="Q5VV52">
    <property type="interactions" value="27"/>
</dbReference>
<dbReference type="MINT" id="Q5VV52"/>
<dbReference type="STRING" id="9606.ENSP00000361580"/>
<dbReference type="GlyGen" id="Q5VV52">
    <property type="glycosylation" value="3 sites, 2 N-linked glycans (2 sites), 1 O-linked glycan (1 site)"/>
</dbReference>
<dbReference type="iPTMnet" id="Q5VV52"/>
<dbReference type="PhosphoSitePlus" id="Q5VV52"/>
<dbReference type="BioMuta" id="ZNF691"/>
<dbReference type="DMDM" id="74756884"/>
<dbReference type="jPOST" id="Q5VV52"/>
<dbReference type="MassIVE" id="Q5VV52"/>
<dbReference type="PaxDb" id="9606-ENSP00000361580"/>
<dbReference type="PeptideAtlas" id="Q5VV52"/>
<dbReference type="ProteomicsDB" id="65447">
    <molecule id="Q5VV52-2"/>
</dbReference>
<dbReference type="ProteomicsDB" id="65448">
    <molecule id="Q5VV52-3"/>
</dbReference>
<dbReference type="Pumba" id="Q5VV52"/>
<dbReference type="Antibodypedia" id="18182">
    <property type="antibodies" value="124 antibodies from 22 providers"/>
</dbReference>
<dbReference type="DNASU" id="51058"/>
<dbReference type="Ensembl" id="ENST00000372502.5">
    <molecule id="Q5VV52-2"/>
    <property type="protein sequence ID" value="ENSP00000361580.2"/>
    <property type="gene ID" value="ENSG00000164011.18"/>
</dbReference>
<dbReference type="Ensembl" id="ENST00000372506.5">
    <molecule id="Q5VV52-3"/>
    <property type="protein sequence ID" value="ENSP00000361584.1"/>
    <property type="gene ID" value="ENSG00000164011.18"/>
</dbReference>
<dbReference type="Ensembl" id="ENST00000372507.5">
    <molecule id="Q5VV52-3"/>
    <property type="protein sequence ID" value="ENSP00000361585.1"/>
    <property type="gene ID" value="ENSG00000164011.18"/>
</dbReference>
<dbReference type="Ensembl" id="ENST00000372508.7">
    <molecule id="Q5VV52-3"/>
    <property type="protein sequence ID" value="ENSP00000361586.3"/>
    <property type="gene ID" value="ENSG00000164011.18"/>
</dbReference>
<dbReference type="Ensembl" id="ENST00000651192.1">
    <molecule id="Q5VV52-2"/>
    <property type="protein sequence ID" value="ENSP00000498913.1"/>
    <property type="gene ID" value="ENSG00000164011.18"/>
</dbReference>
<dbReference type="GeneID" id="51058"/>
<dbReference type="KEGG" id="hsa:51058"/>
<dbReference type="MANE-Select" id="ENST00000651192.1">
    <property type="protein sequence ID" value="ENSP00000498913.1"/>
    <property type="RefSeq nucleotide sequence ID" value="NM_001242739.2"/>
    <property type="RefSeq protein sequence ID" value="NP_001229668.1"/>
</dbReference>
<dbReference type="UCSC" id="uc001cig.4">
    <molecule id="Q5VV52-2"/>
    <property type="organism name" value="human"/>
</dbReference>
<dbReference type="AGR" id="HGNC:28028"/>
<dbReference type="CTD" id="51058"/>
<dbReference type="GeneCards" id="ZNF691"/>
<dbReference type="HGNC" id="HGNC:28028">
    <property type="gene designation" value="ZNF691"/>
</dbReference>
<dbReference type="HPA" id="ENSG00000164011">
    <property type="expression patterns" value="Low tissue specificity"/>
</dbReference>
<dbReference type="neXtProt" id="NX_Q5VV52"/>
<dbReference type="OpenTargets" id="ENSG00000164011"/>
<dbReference type="PharmGKB" id="PA142670490"/>
<dbReference type="VEuPathDB" id="HostDB:ENSG00000164011"/>
<dbReference type="eggNOG" id="KOG1721">
    <property type="taxonomic scope" value="Eukaryota"/>
</dbReference>
<dbReference type="GeneTree" id="ENSGT00940000161958"/>
<dbReference type="HOGENOM" id="CLU_002678_26_0_1"/>
<dbReference type="InParanoid" id="Q5VV52"/>
<dbReference type="OMA" id="KTHMGEQ"/>
<dbReference type="OrthoDB" id="40579at2759"/>
<dbReference type="PAN-GO" id="Q5VV52">
    <property type="GO annotations" value="3 GO annotations based on evolutionary models"/>
</dbReference>
<dbReference type="PhylomeDB" id="Q5VV52"/>
<dbReference type="TreeFam" id="TF337637"/>
<dbReference type="PathwayCommons" id="Q5VV52"/>
<dbReference type="Reactome" id="R-HSA-212436">
    <property type="pathway name" value="Generic Transcription Pathway"/>
</dbReference>
<dbReference type="SignaLink" id="Q5VV52"/>
<dbReference type="BioGRID-ORCS" id="51058">
    <property type="hits" value="17 hits in 1178 CRISPR screens"/>
</dbReference>
<dbReference type="ChiTaRS" id="ZNF691">
    <property type="organism name" value="human"/>
</dbReference>
<dbReference type="GenomeRNAi" id="51058"/>
<dbReference type="Pharos" id="Q5VV52">
    <property type="development level" value="Tdark"/>
</dbReference>
<dbReference type="PRO" id="PR:Q5VV52"/>
<dbReference type="Proteomes" id="UP000005640">
    <property type="component" value="Chromosome 1"/>
</dbReference>
<dbReference type="RNAct" id="Q5VV52">
    <property type="molecule type" value="protein"/>
</dbReference>
<dbReference type="Bgee" id="ENSG00000164011">
    <property type="expression patterns" value="Expressed in primordial germ cell in gonad and 114 other cell types or tissues"/>
</dbReference>
<dbReference type="ExpressionAtlas" id="Q5VV52">
    <property type="expression patterns" value="baseline and differential"/>
</dbReference>
<dbReference type="GO" id="GO:0005634">
    <property type="term" value="C:nucleus"/>
    <property type="evidence" value="ECO:0007669"/>
    <property type="project" value="UniProtKB-SubCell"/>
</dbReference>
<dbReference type="GO" id="GO:0003700">
    <property type="term" value="F:DNA-binding transcription factor activity"/>
    <property type="evidence" value="ECO:0000318"/>
    <property type="project" value="GO_Central"/>
</dbReference>
<dbReference type="GO" id="GO:0000978">
    <property type="term" value="F:RNA polymerase II cis-regulatory region sequence-specific DNA binding"/>
    <property type="evidence" value="ECO:0000318"/>
    <property type="project" value="GO_Central"/>
</dbReference>
<dbReference type="GO" id="GO:0008270">
    <property type="term" value="F:zinc ion binding"/>
    <property type="evidence" value="ECO:0007669"/>
    <property type="project" value="UniProtKB-KW"/>
</dbReference>
<dbReference type="GO" id="GO:0006357">
    <property type="term" value="P:regulation of transcription by RNA polymerase II"/>
    <property type="evidence" value="ECO:0000318"/>
    <property type="project" value="GO_Central"/>
</dbReference>
<dbReference type="FunFam" id="3.30.160.60:FF:000088">
    <property type="entry name" value="Zinc finger and SCAN domain containing 2"/>
    <property type="match status" value="1"/>
</dbReference>
<dbReference type="FunFam" id="3.30.160.60:FF:000839">
    <property type="entry name" value="Zinc finger protein 691"/>
    <property type="match status" value="1"/>
</dbReference>
<dbReference type="FunFam" id="3.30.160.60:FF:000885">
    <property type="entry name" value="Zinc finger protein 691"/>
    <property type="match status" value="1"/>
</dbReference>
<dbReference type="FunFam" id="3.30.160.60:FF:000938">
    <property type="entry name" value="Zinc finger protein 691"/>
    <property type="match status" value="1"/>
</dbReference>
<dbReference type="FunFam" id="3.30.160.60:FF:000953">
    <property type="entry name" value="Zinc finger protein 691"/>
    <property type="match status" value="1"/>
</dbReference>
<dbReference type="FunFam" id="3.30.160.60:FF:001167">
    <property type="entry name" value="zinc finger protein 691"/>
    <property type="match status" value="1"/>
</dbReference>
<dbReference type="FunFam" id="3.30.160.60:FF:000290">
    <property type="entry name" value="Zinc finger protein 697 isoform X1"/>
    <property type="match status" value="1"/>
</dbReference>
<dbReference type="Gene3D" id="3.30.160.60">
    <property type="entry name" value="Classic Zinc Finger"/>
    <property type="match status" value="7"/>
</dbReference>
<dbReference type="InterPro" id="IPR036236">
    <property type="entry name" value="Znf_C2H2_sf"/>
</dbReference>
<dbReference type="InterPro" id="IPR013087">
    <property type="entry name" value="Znf_C2H2_type"/>
</dbReference>
<dbReference type="PANTHER" id="PTHR23235">
    <property type="entry name" value="KRUEPPEL-LIKE TRANSCRIPTION FACTOR"/>
    <property type="match status" value="1"/>
</dbReference>
<dbReference type="PANTHER" id="PTHR23235:SF142">
    <property type="entry name" value="ZINC FINGER PROTEIN 384"/>
    <property type="match status" value="1"/>
</dbReference>
<dbReference type="Pfam" id="PF00096">
    <property type="entry name" value="zf-C2H2"/>
    <property type="match status" value="5"/>
</dbReference>
<dbReference type="Pfam" id="PF13465">
    <property type="entry name" value="zf-H2C2_2"/>
    <property type="match status" value="1"/>
</dbReference>
<dbReference type="SMART" id="SM00355">
    <property type="entry name" value="ZnF_C2H2"/>
    <property type="match status" value="7"/>
</dbReference>
<dbReference type="SUPFAM" id="SSF57667">
    <property type="entry name" value="beta-beta-alpha zinc fingers"/>
    <property type="match status" value="4"/>
</dbReference>
<dbReference type="PROSITE" id="PS00028">
    <property type="entry name" value="ZINC_FINGER_C2H2_1"/>
    <property type="match status" value="7"/>
</dbReference>
<dbReference type="PROSITE" id="PS50157">
    <property type="entry name" value="ZINC_FINGER_C2H2_2"/>
    <property type="match status" value="7"/>
</dbReference>
<feature type="chain" id="PRO_0000234012" description="Zinc finger protein 691">
    <location>
        <begin position="1"/>
        <end position="315"/>
    </location>
</feature>
<feature type="zinc finger region" description="C2H2-type 1" evidence="1">
    <location>
        <begin position="115"/>
        <end position="137"/>
    </location>
</feature>
<feature type="zinc finger region" description="C2H2-type 2" evidence="1">
    <location>
        <begin position="143"/>
        <end position="165"/>
    </location>
</feature>
<feature type="zinc finger region" description="C2H2-type 3" evidence="1">
    <location>
        <begin position="171"/>
        <end position="193"/>
    </location>
</feature>
<feature type="zinc finger region" description="C2H2-type 4" evidence="1">
    <location>
        <begin position="199"/>
        <end position="221"/>
    </location>
</feature>
<feature type="zinc finger region" description="C2H2-type 5" evidence="1">
    <location>
        <begin position="227"/>
        <end position="249"/>
    </location>
</feature>
<feature type="zinc finger region" description="C2H2-type 6" evidence="1">
    <location>
        <begin position="255"/>
        <end position="277"/>
    </location>
</feature>
<feature type="zinc finger region" description="C2H2-type 7" evidence="1">
    <location>
        <begin position="283"/>
        <end position="305"/>
    </location>
</feature>
<feature type="region of interest" description="Disordered" evidence="2">
    <location>
        <begin position="1"/>
        <end position="90"/>
    </location>
</feature>
<feature type="compositionally biased region" description="Polar residues" evidence="2">
    <location>
        <begin position="1"/>
        <end position="10"/>
    </location>
</feature>
<feature type="compositionally biased region" description="Basic and acidic residues" evidence="2">
    <location>
        <begin position="33"/>
        <end position="58"/>
    </location>
</feature>
<feature type="modified residue" description="Phosphoserine" evidence="4">
    <location>
        <position position="39"/>
    </location>
</feature>
<feature type="modified residue" description="Phosphoserine" evidence="4">
    <location>
        <position position="75"/>
    </location>
</feature>
<feature type="modified residue" description="Phosphoserine" evidence="4">
    <location>
        <position position="77"/>
    </location>
</feature>
<feature type="cross-link" description="Glycyl lysine isopeptide (Lys-Gly) (interchain with G-Cter in SUMO2)" evidence="5 6">
    <location>
        <position position="113"/>
    </location>
</feature>
<feature type="splice variant" id="VSP_018183" description="In isoform 2." evidence="3">
    <location>
        <begin position="1"/>
        <end position="31"/>
    </location>
</feature>
<feature type="sequence conflict" description="In Ref. 2; BAA91434." evidence="3" ref="2">
    <original>V</original>
    <variation>A</variation>
    <location>
        <position position="94"/>
    </location>
</feature>
<protein>
    <recommendedName>
        <fullName>Zinc finger protein 691</fullName>
    </recommendedName>
</protein>
<keyword id="KW-0025">Alternative splicing</keyword>
<keyword id="KW-0238">DNA-binding</keyword>
<keyword id="KW-1017">Isopeptide bond</keyword>
<keyword id="KW-0479">Metal-binding</keyword>
<keyword id="KW-0539">Nucleus</keyword>
<keyword id="KW-0597">Phosphoprotein</keyword>
<keyword id="KW-1267">Proteomics identification</keyword>
<keyword id="KW-1185">Reference proteome</keyword>
<keyword id="KW-0677">Repeat</keyword>
<keyword id="KW-0832">Ubl conjugation</keyword>
<keyword id="KW-0862">Zinc</keyword>
<keyword id="KW-0863">Zinc-finger</keyword>
<gene>
    <name type="primary">ZNF691</name>
</gene>
<reference key="1">
    <citation type="submission" date="1999-02" db="EMBL/GenBank/DDBJ databases">
        <authorList>
            <person name="Mei G."/>
            <person name="Yu W."/>
            <person name="Gibbs R.A."/>
        </authorList>
    </citation>
    <scope>NUCLEOTIDE SEQUENCE [LARGE SCALE MRNA] (ISOFORM 2)</scope>
    <source>
        <tissue>Brain</tissue>
    </source>
</reference>
<reference key="2">
    <citation type="journal article" date="2004" name="Nat. Genet.">
        <title>Complete sequencing and characterization of 21,243 full-length human cDNAs.</title>
        <authorList>
            <person name="Ota T."/>
            <person name="Suzuki Y."/>
            <person name="Nishikawa T."/>
            <person name="Otsuki T."/>
            <person name="Sugiyama T."/>
            <person name="Irie R."/>
            <person name="Wakamatsu A."/>
            <person name="Hayashi K."/>
            <person name="Sato H."/>
            <person name="Nagai K."/>
            <person name="Kimura K."/>
            <person name="Makita H."/>
            <person name="Sekine M."/>
            <person name="Obayashi M."/>
            <person name="Nishi T."/>
            <person name="Shibahara T."/>
            <person name="Tanaka T."/>
            <person name="Ishii S."/>
            <person name="Yamamoto J."/>
            <person name="Saito K."/>
            <person name="Kawai Y."/>
            <person name="Isono Y."/>
            <person name="Nakamura Y."/>
            <person name="Nagahari K."/>
            <person name="Murakami K."/>
            <person name="Yasuda T."/>
            <person name="Iwayanagi T."/>
            <person name="Wagatsuma M."/>
            <person name="Shiratori A."/>
            <person name="Sudo H."/>
            <person name="Hosoiri T."/>
            <person name="Kaku Y."/>
            <person name="Kodaira H."/>
            <person name="Kondo H."/>
            <person name="Sugawara M."/>
            <person name="Takahashi M."/>
            <person name="Kanda K."/>
            <person name="Yokoi T."/>
            <person name="Furuya T."/>
            <person name="Kikkawa E."/>
            <person name="Omura Y."/>
            <person name="Abe K."/>
            <person name="Kamihara K."/>
            <person name="Katsuta N."/>
            <person name="Sato K."/>
            <person name="Tanikawa M."/>
            <person name="Yamazaki M."/>
            <person name="Ninomiya K."/>
            <person name="Ishibashi T."/>
            <person name="Yamashita H."/>
            <person name="Murakawa K."/>
            <person name="Fujimori K."/>
            <person name="Tanai H."/>
            <person name="Kimata M."/>
            <person name="Watanabe M."/>
            <person name="Hiraoka S."/>
            <person name="Chiba Y."/>
            <person name="Ishida S."/>
            <person name="Ono Y."/>
            <person name="Takiguchi S."/>
            <person name="Watanabe S."/>
            <person name="Yosida M."/>
            <person name="Hotuta T."/>
            <person name="Kusano J."/>
            <person name="Kanehori K."/>
            <person name="Takahashi-Fujii A."/>
            <person name="Hara H."/>
            <person name="Tanase T.-O."/>
            <person name="Nomura Y."/>
            <person name="Togiya S."/>
            <person name="Komai F."/>
            <person name="Hara R."/>
            <person name="Takeuchi K."/>
            <person name="Arita M."/>
            <person name="Imose N."/>
            <person name="Musashino K."/>
            <person name="Yuuki H."/>
            <person name="Oshima A."/>
            <person name="Sasaki N."/>
            <person name="Aotsuka S."/>
            <person name="Yoshikawa Y."/>
            <person name="Matsunawa H."/>
            <person name="Ichihara T."/>
            <person name="Shiohata N."/>
            <person name="Sano S."/>
            <person name="Moriya S."/>
            <person name="Momiyama H."/>
            <person name="Satoh N."/>
            <person name="Takami S."/>
            <person name="Terashima Y."/>
            <person name="Suzuki O."/>
            <person name="Nakagawa S."/>
            <person name="Senoh A."/>
            <person name="Mizoguchi H."/>
            <person name="Goto Y."/>
            <person name="Shimizu F."/>
            <person name="Wakebe H."/>
            <person name="Hishigaki H."/>
            <person name="Watanabe T."/>
            <person name="Sugiyama A."/>
            <person name="Takemoto M."/>
            <person name="Kawakami B."/>
            <person name="Yamazaki M."/>
            <person name="Watanabe K."/>
            <person name="Kumagai A."/>
            <person name="Itakura S."/>
            <person name="Fukuzumi Y."/>
            <person name="Fujimori Y."/>
            <person name="Komiyama M."/>
            <person name="Tashiro H."/>
            <person name="Tanigami A."/>
            <person name="Fujiwara T."/>
            <person name="Ono T."/>
            <person name="Yamada K."/>
            <person name="Fujii Y."/>
            <person name="Ozaki K."/>
            <person name="Hirao M."/>
            <person name="Ohmori Y."/>
            <person name="Kawabata A."/>
            <person name="Hikiji T."/>
            <person name="Kobatake N."/>
            <person name="Inagaki H."/>
            <person name="Ikema Y."/>
            <person name="Okamoto S."/>
            <person name="Okitani R."/>
            <person name="Kawakami T."/>
            <person name="Noguchi S."/>
            <person name="Itoh T."/>
            <person name="Shigeta K."/>
            <person name="Senba T."/>
            <person name="Matsumura K."/>
            <person name="Nakajima Y."/>
            <person name="Mizuno T."/>
            <person name="Morinaga M."/>
            <person name="Sasaki M."/>
            <person name="Togashi T."/>
            <person name="Oyama M."/>
            <person name="Hata H."/>
            <person name="Watanabe M."/>
            <person name="Komatsu T."/>
            <person name="Mizushima-Sugano J."/>
            <person name="Satoh T."/>
            <person name="Shirai Y."/>
            <person name="Takahashi Y."/>
            <person name="Nakagawa K."/>
            <person name="Okumura K."/>
            <person name="Nagase T."/>
            <person name="Nomura N."/>
            <person name="Kikuchi H."/>
            <person name="Masuho Y."/>
            <person name="Yamashita R."/>
            <person name="Nakai K."/>
            <person name="Yada T."/>
            <person name="Nakamura Y."/>
            <person name="Ohara O."/>
            <person name="Isogai T."/>
            <person name="Sugano S."/>
        </authorList>
    </citation>
    <scope>NUCLEOTIDE SEQUENCE [LARGE SCALE MRNA] (ISOFORM 1)</scope>
    <source>
        <tissue>Embryo</tissue>
        <tissue>Thalamus</tissue>
    </source>
</reference>
<reference key="3">
    <citation type="submission" date="2004-06" db="EMBL/GenBank/DDBJ databases">
        <title>Cloning of human full open reading frames in Gateway(TM) system entry vector (pDONR201).</title>
        <authorList>
            <person name="Ebert L."/>
            <person name="Schick M."/>
            <person name="Neubert P."/>
            <person name="Schatten R."/>
            <person name="Henze S."/>
            <person name="Korn B."/>
        </authorList>
    </citation>
    <scope>NUCLEOTIDE SEQUENCE [LARGE SCALE MRNA] (ISOFORM 2)</scope>
</reference>
<reference key="4">
    <citation type="journal article" date="2006" name="Nature">
        <title>The DNA sequence and biological annotation of human chromosome 1.</title>
        <authorList>
            <person name="Gregory S.G."/>
            <person name="Barlow K.F."/>
            <person name="McLay K.E."/>
            <person name="Kaul R."/>
            <person name="Swarbreck D."/>
            <person name="Dunham A."/>
            <person name="Scott C.E."/>
            <person name="Howe K.L."/>
            <person name="Woodfine K."/>
            <person name="Spencer C.C.A."/>
            <person name="Jones M.C."/>
            <person name="Gillson C."/>
            <person name="Searle S."/>
            <person name="Zhou Y."/>
            <person name="Kokocinski F."/>
            <person name="McDonald L."/>
            <person name="Evans R."/>
            <person name="Phillips K."/>
            <person name="Atkinson A."/>
            <person name="Cooper R."/>
            <person name="Jones C."/>
            <person name="Hall R.E."/>
            <person name="Andrews T.D."/>
            <person name="Lloyd C."/>
            <person name="Ainscough R."/>
            <person name="Almeida J.P."/>
            <person name="Ambrose K.D."/>
            <person name="Anderson F."/>
            <person name="Andrew R.W."/>
            <person name="Ashwell R.I.S."/>
            <person name="Aubin K."/>
            <person name="Babbage A.K."/>
            <person name="Bagguley C.L."/>
            <person name="Bailey J."/>
            <person name="Beasley H."/>
            <person name="Bethel G."/>
            <person name="Bird C.P."/>
            <person name="Bray-Allen S."/>
            <person name="Brown J.Y."/>
            <person name="Brown A.J."/>
            <person name="Buckley D."/>
            <person name="Burton J."/>
            <person name="Bye J."/>
            <person name="Carder C."/>
            <person name="Chapman J.C."/>
            <person name="Clark S.Y."/>
            <person name="Clarke G."/>
            <person name="Clee C."/>
            <person name="Cobley V."/>
            <person name="Collier R.E."/>
            <person name="Corby N."/>
            <person name="Coville G.J."/>
            <person name="Davies J."/>
            <person name="Deadman R."/>
            <person name="Dunn M."/>
            <person name="Earthrowl M."/>
            <person name="Ellington A.G."/>
            <person name="Errington H."/>
            <person name="Frankish A."/>
            <person name="Frankland J."/>
            <person name="French L."/>
            <person name="Garner P."/>
            <person name="Garnett J."/>
            <person name="Gay L."/>
            <person name="Ghori M.R.J."/>
            <person name="Gibson R."/>
            <person name="Gilby L.M."/>
            <person name="Gillett W."/>
            <person name="Glithero R.J."/>
            <person name="Grafham D.V."/>
            <person name="Griffiths C."/>
            <person name="Griffiths-Jones S."/>
            <person name="Grocock R."/>
            <person name="Hammond S."/>
            <person name="Harrison E.S.I."/>
            <person name="Hart E."/>
            <person name="Haugen E."/>
            <person name="Heath P.D."/>
            <person name="Holmes S."/>
            <person name="Holt K."/>
            <person name="Howden P.J."/>
            <person name="Hunt A.R."/>
            <person name="Hunt S.E."/>
            <person name="Hunter G."/>
            <person name="Isherwood J."/>
            <person name="James R."/>
            <person name="Johnson C."/>
            <person name="Johnson D."/>
            <person name="Joy A."/>
            <person name="Kay M."/>
            <person name="Kershaw J.K."/>
            <person name="Kibukawa M."/>
            <person name="Kimberley A.M."/>
            <person name="King A."/>
            <person name="Knights A.J."/>
            <person name="Lad H."/>
            <person name="Laird G."/>
            <person name="Lawlor S."/>
            <person name="Leongamornlert D.A."/>
            <person name="Lloyd D.M."/>
            <person name="Loveland J."/>
            <person name="Lovell J."/>
            <person name="Lush M.J."/>
            <person name="Lyne R."/>
            <person name="Martin S."/>
            <person name="Mashreghi-Mohammadi M."/>
            <person name="Matthews L."/>
            <person name="Matthews N.S.W."/>
            <person name="McLaren S."/>
            <person name="Milne S."/>
            <person name="Mistry S."/>
            <person name="Moore M.J.F."/>
            <person name="Nickerson T."/>
            <person name="O'Dell C.N."/>
            <person name="Oliver K."/>
            <person name="Palmeiri A."/>
            <person name="Palmer S.A."/>
            <person name="Parker A."/>
            <person name="Patel D."/>
            <person name="Pearce A.V."/>
            <person name="Peck A.I."/>
            <person name="Pelan S."/>
            <person name="Phelps K."/>
            <person name="Phillimore B.J."/>
            <person name="Plumb R."/>
            <person name="Rajan J."/>
            <person name="Raymond C."/>
            <person name="Rouse G."/>
            <person name="Saenphimmachak C."/>
            <person name="Sehra H.K."/>
            <person name="Sheridan E."/>
            <person name="Shownkeen R."/>
            <person name="Sims S."/>
            <person name="Skuce C.D."/>
            <person name="Smith M."/>
            <person name="Steward C."/>
            <person name="Subramanian S."/>
            <person name="Sycamore N."/>
            <person name="Tracey A."/>
            <person name="Tromans A."/>
            <person name="Van Helmond Z."/>
            <person name="Wall M."/>
            <person name="Wallis J.M."/>
            <person name="White S."/>
            <person name="Whitehead S.L."/>
            <person name="Wilkinson J.E."/>
            <person name="Willey D.L."/>
            <person name="Williams H."/>
            <person name="Wilming L."/>
            <person name="Wray P.W."/>
            <person name="Wu Z."/>
            <person name="Coulson A."/>
            <person name="Vaudin M."/>
            <person name="Sulston J.E."/>
            <person name="Durbin R.M."/>
            <person name="Hubbard T."/>
            <person name="Wooster R."/>
            <person name="Dunham I."/>
            <person name="Carter N.P."/>
            <person name="McVean G."/>
            <person name="Ross M.T."/>
            <person name="Harrow J."/>
            <person name="Olson M.V."/>
            <person name="Beck S."/>
            <person name="Rogers J."/>
            <person name="Bentley D.R."/>
        </authorList>
    </citation>
    <scope>NUCLEOTIDE SEQUENCE [LARGE SCALE GENOMIC DNA]</scope>
</reference>
<reference key="5">
    <citation type="submission" date="2005-09" db="EMBL/GenBank/DDBJ databases">
        <authorList>
            <person name="Mural R.J."/>
            <person name="Istrail S."/>
            <person name="Sutton G."/>
            <person name="Florea L."/>
            <person name="Halpern A.L."/>
            <person name="Mobarry C.M."/>
            <person name="Lippert R."/>
            <person name="Walenz B."/>
            <person name="Shatkay H."/>
            <person name="Dew I."/>
            <person name="Miller J.R."/>
            <person name="Flanigan M.J."/>
            <person name="Edwards N.J."/>
            <person name="Bolanos R."/>
            <person name="Fasulo D."/>
            <person name="Halldorsson B.V."/>
            <person name="Hannenhalli S."/>
            <person name="Turner R."/>
            <person name="Yooseph S."/>
            <person name="Lu F."/>
            <person name="Nusskern D.R."/>
            <person name="Shue B.C."/>
            <person name="Zheng X.H."/>
            <person name="Zhong F."/>
            <person name="Delcher A.L."/>
            <person name="Huson D.H."/>
            <person name="Kravitz S.A."/>
            <person name="Mouchard L."/>
            <person name="Reinert K."/>
            <person name="Remington K.A."/>
            <person name="Clark A.G."/>
            <person name="Waterman M.S."/>
            <person name="Eichler E.E."/>
            <person name="Adams M.D."/>
            <person name="Hunkapiller M.W."/>
            <person name="Myers E.W."/>
            <person name="Venter J.C."/>
        </authorList>
    </citation>
    <scope>NUCLEOTIDE SEQUENCE [LARGE SCALE GENOMIC DNA]</scope>
</reference>
<reference key="6">
    <citation type="journal article" date="2004" name="Genome Res.">
        <title>The status, quality, and expansion of the NIH full-length cDNA project: the Mammalian Gene Collection (MGC).</title>
        <authorList>
            <consortium name="The MGC Project Team"/>
        </authorList>
    </citation>
    <scope>NUCLEOTIDE SEQUENCE [LARGE SCALE MRNA] (ISOFORM 2)</scope>
    <source>
        <tissue>Cervix</tissue>
    </source>
</reference>
<reference key="7">
    <citation type="journal article" date="2010" name="Sci. Signal.">
        <title>Quantitative phosphoproteomics reveals widespread full phosphorylation site occupancy during mitosis.</title>
        <authorList>
            <person name="Olsen J.V."/>
            <person name="Vermeulen M."/>
            <person name="Santamaria A."/>
            <person name="Kumar C."/>
            <person name="Miller M.L."/>
            <person name="Jensen L.J."/>
            <person name="Gnad F."/>
            <person name="Cox J."/>
            <person name="Jensen T.S."/>
            <person name="Nigg E.A."/>
            <person name="Brunak S."/>
            <person name="Mann M."/>
        </authorList>
    </citation>
    <scope>IDENTIFICATION BY MASS SPECTROMETRY [LARGE SCALE ANALYSIS]</scope>
    <source>
        <tissue>Cervix carcinoma</tissue>
    </source>
</reference>
<reference key="8">
    <citation type="journal article" date="2011" name="Sci. Signal.">
        <title>System-wide temporal characterization of the proteome and phosphoproteome of human embryonic stem cell differentiation.</title>
        <authorList>
            <person name="Rigbolt K.T."/>
            <person name="Prokhorova T.A."/>
            <person name="Akimov V."/>
            <person name="Henningsen J."/>
            <person name="Johansen P.T."/>
            <person name="Kratchmarova I."/>
            <person name="Kassem M."/>
            <person name="Mann M."/>
            <person name="Olsen J.V."/>
            <person name="Blagoev B."/>
        </authorList>
    </citation>
    <scope>IDENTIFICATION BY MASS SPECTROMETRY [LARGE SCALE ANALYSIS]</scope>
</reference>
<reference key="9">
    <citation type="journal article" date="2013" name="J. Proteome Res.">
        <title>Toward a comprehensive characterization of a human cancer cell phosphoproteome.</title>
        <authorList>
            <person name="Zhou H."/>
            <person name="Di Palma S."/>
            <person name="Preisinger C."/>
            <person name="Peng M."/>
            <person name="Polat A.N."/>
            <person name="Heck A.J."/>
            <person name="Mohammed S."/>
        </authorList>
    </citation>
    <scope>PHOSPHORYLATION [LARGE SCALE ANALYSIS] AT SER-39; SER-75 AND SER-77</scope>
    <scope>IDENTIFICATION BY MASS SPECTROMETRY [LARGE SCALE ANALYSIS]</scope>
    <source>
        <tissue>Cervix carcinoma</tissue>
        <tissue>Erythroleukemia</tissue>
    </source>
</reference>
<reference key="10">
    <citation type="journal article" date="2014" name="Nat. Struct. Mol. Biol.">
        <title>Uncovering global SUMOylation signaling networks in a site-specific manner.</title>
        <authorList>
            <person name="Hendriks I.A."/>
            <person name="D'Souza R.C."/>
            <person name="Yang B."/>
            <person name="Verlaan-de Vries M."/>
            <person name="Mann M."/>
            <person name="Vertegaal A.C."/>
        </authorList>
    </citation>
    <scope>SUMOYLATION [LARGE SCALE ANALYSIS] AT LYS-113</scope>
    <scope>IDENTIFICATION BY MASS SPECTROMETRY [LARGE SCALE ANALYSIS]</scope>
</reference>
<reference key="11">
    <citation type="journal article" date="2017" name="Nat. Struct. Mol. Biol.">
        <title>Site-specific mapping of the human SUMO proteome reveals co-modification with phosphorylation.</title>
        <authorList>
            <person name="Hendriks I.A."/>
            <person name="Lyon D."/>
            <person name="Young C."/>
            <person name="Jensen L.J."/>
            <person name="Vertegaal A.C."/>
            <person name="Nielsen M.L."/>
        </authorList>
    </citation>
    <scope>SUMOYLATION [LARGE SCALE ANALYSIS] AT LYS-113</scope>
    <scope>IDENTIFICATION BY MASS SPECTROMETRY [LARGE SCALE ANALYSIS]</scope>
</reference>
<accession>Q5VV52</accession>
<accession>A8MXP6</accession>
<accession>B4DJR7</accession>
<accession>O95878</accession>
<accession>Q9NWE8</accession>
<name>ZN691_HUMAN</name>
<organism>
    <name type="scientific">Homo sapiens</name>
    <name type="common">Human</name>
    <dbReference type="NCBI Taxonomy" id="9606"/>
    <lineage>
        <taxon>Eukaryota</taxon>
        <taxon>Metazoa</taxon>
        <taxon>Chordata</taxon>
        <taxon>Craniata</taxon>
        <taxon>Vertebrata</taxon>
        <taxon>Euteleostomi</taxon>
        <taxon>Mammalia</taxon>
        <taxon>Eutheria</taxon>
        <taxon>Euarchontoglires</taxon>
        <taxon>Primates</taxon>
        <taxon>Haplorrhini</taxon>
        <taxon>Catarrhini</taxon>
        <taxon>Hominidae</taxon>
        <taxon>Homo</taxon>
    </lineage>
</organism>
<sequence>MSLCSPTHSAEMSLFLQGPEEMLPLSSEGSEMGSEKEQSPEPHLPEEGEGGKPWRVDDSEGSWIPPGEKEHGQESLSDELQETHPKKPWQKVTVRARELGDPIAHPRHEADEKPFICAQCGKTFNNTSNLRTHQRIHTGEKPYKCSECGKSFSRSSNRIRHERIHLEEKHYKCPKCQESFRRRSDLTTHQQDHLGKRPYRCDICGKSFSQSATLAVHHRTHLEPAPYICCECGKSFSNSSSFGVHHRTHTGERPYECTECGRTFSDISNFGAHQRTHRGEKPYRCTVCGKHFSRSSNLIRHQKTHLGEQAGKDSS</sequence>
<comment type="function">
    <text>May be involved in transcriptional regulation.</text>
</comment>
<comment type="interaction">
    <interactant intactId="EBI-720883">
        <id>Q5VV52</id>
    </interactant>
    <interactant intactId="EBI-79165">
        <id>Q9NRD5</id>
        <label>PICK1</label>
    </interactant>
    <organismsDiffer>false</organismsDiffer>
    <experiments>3</experiments>
</comment>
<comment type="interaction">
    <interactant intactId="EBI-720883">
        <id>Q5VV52</id>
    </interactant>
    <interactant intactId="EBI-725997">
        <id>Q8WV44</id>
        <label>TRIM41</label>
    </interactant>
    <organismsDiffer>false</organismsDiffer>
    <experiments>3</experiments>
</comment>
<comment type="subcellular location">
    <subcellularLocation>
        <location evidence="3">Nucleus</location>
    </subcellularLocation>
</comment>
<comment type="alternative products">
    <event type="alternative splicing"/>
    <isoform>
        <id>Q5VV52-2</id>
        <name>1</name>
        <sequence type="displayed"/>
    </isoform>
    <isoform>
        <id>Q5VV52-3</id>
        <name>2</name>
        <sequence type="described" ref="VSP_018183"/>
    </isoform>
</comment>
<comment type="similarity">
    <text evidence="3">Belongs to the krueppel C2H2-type zinc-finger protein family.</text>
</comment>
<comment type="sequence caution" evidence="3">
    <conflict type="miscellaneous discrepancy">
        <sequence resource="EMBL-CDS" id="BAA91434"/>
    </conflict>
    <text>Aberrant splicing.</text>
</comment>